<accession>Q57SU4</accession>
<name>GMHA_SALCH</name>
<protein>
    <recommendedName>
        <fullName evidence="1">Phosphoheptose isomerase</fullName>
        <ecNumber evidence="1">5.3.1.28</ecNumber>
    </recommendedName>
    <alternativeName>
        <fullName evidence="1">Sedoheptulose 7-phosphate isomerase</fullName>
    </alternativeName>
</protein>
<organism>
    <name type="scientific">Salmonella choleraesuis (strain SC-B67)</name>
    <dbReference type="NCBI Taxonomy" id="321314"/>
    <lineage>
        <taxon>Bacteria</taxon>
        <taxon>Pseudomonadati</taxon>
        <taxon>Pseudomonadota</taxon>
        <taxon>Gammaproteobacteria</taxon>
        <taxon>Enterobacterales</taxon>
        <taxon>Enterobacteriaceae</taxon>
        <taxon>Salmonella</taxon>
    </lineage>
</organism>
<reference key="1">
    <citation type="journal article" date="2005" name="Nucleic Acids Res.">
        <title>The genome sequence of Salmonella enterica serovar Choleraesuis, a highly invasive and resistant zoonotic pathogen.</title>
        <authorList>
            <person name="Chiu C.-H."/>
            <person name="Tang P."/>
            <person name="Chu C."/>
            <person name="Hu S."/>
            <person name="Bao Q."/>
            <person name="Yu J."/>
            <person name="Chou Y.-Y."/>
            <person name="Wang H.-S."/>
            <person name="Lee Y.-S."/>
        </authorList>
    </citation>
    <scope>NUCLEOTIDE SEQUENCE [LARGE SCALE GENOMIC DNA]</scope>
    <source>
        <strain>SC-B67</strain>
    </source>
</reference>
<dbReference type="EC" id="5.3.1.28" evidence="1"/>
<dbReference type="EMBL" id="AE017220">
    <property type="protein sequence ID" value="AAX64217.1"/>
    <property type="molecule type" value="Genomic_DNA"/>
</dbReference>
<dbReference type="SMR" id="Q57SU4"/>
<dbReference type="KEGG" id="sec:SCH_0311"/>
<dbReference type="HOGENOM" id="CLU_080999_4_0_6"/>
<dbReference type="UniPathway" id="UPA00041">
    <property type="reaction ID" value="UER00436"/>
</dbReference>
<dbReference type="Proteomes" id="UP000000538">
    <property type="component" value="Chromosome"/>
</dbReference>
<dbReference type="GO" id="GO:0005737">
    <property type="term" value="C:cytoplasm"/>
    <property type="evidence" value="ECO:0007669"/>
    <property type="project" value="UniProtKB-SubCell"/>
</dbReference>
<dbReference type="GO" id="GO:0097367">
    <property type="term" value="F:carbohydrate derivative binding"/>
    <property type="evidence" value="ECO:0007669"/>
    <property type="project" value="InterPro"/>
</dbReference>
<dbReference type="GO" id="GO:0008968">
    <property type="term" value="F:D-sedoheptulose 7-phosphate isomerase activity"/>
    <property type="evidence" value="ECO:0007669"/>
    <property type="project" value="UniProtKB-UniRule"/>
</dbReference>
<dbReference type="GO" id="GO:0008270">
    <property type="term" value="F:zinc ion binding"/>
    <property type="evidence" value="ECO:0007669"/>
    <property type="project" value="UniProtKB-UniRule"/>
</dbReference>
<dbReference type="GO" id="GO:0005975">
    <property type="term" value="P:carbohydrate metabolic process"/>
    <property type="evidence" value="ECO:0007669"/>
    <property type="project" value="UniProtKB-UniRule"/>
</dbReference>
<dbReference type="GO" id="GO:2001061">
    <property type="term" value="P:D-glycero-D-manno-heptose 7-phosphate biosynthetic process"/>
    <property type="evidence" value="ECO:0007669"/>
    <property type="project" value="UniProtKB-UniPathway"/>
</dbReference>
<dbReference type="CDD" id="cd05006">
    <property type="entry name" value="SIS_GmhA"/>
    <property type="match status" value="1"/>
</dbReference>
<dbReference type="FunFam" id="3.40.50.10490:FF:000013">
    <property type="entry name" value="Phosphoheptose isomerase"/>
    <property type="match status" value="1"/>
</dbReference>
<dbReference type="Gene3D" id="3.40.50.10490">
    <property type="entry name" value="Glucose-6-phosphate isomerase like protein, domain 1"/>
    <property type="match status" value="1"/>
</dbReference>
<dbReference type="HAMAP" id="MF_00067">
    <property type="entry name" value="GmhA"/>
    <property type="match status" value="1"/>
</dbReference>
<dbReference type="InterPro" id="IPR035461">
    <property type="entry name" value="GmhA/DiaA"/>
</dbReference>
<dbReference type="InterPro" id="IPR004515">
    <property type="entry name" value="Phosphoheptose_Isoase"/>
</dbReference>
<dbReference type="InterPro" id="IPR001347">
    <property type="entry name" value="SIS_dom"/>
</dbReference>
<dbReference type="InterPro" id="IPR046348">
    <property type="entry name" value="SIS_dom_sf"/>
</dbReference>
<dbReference type="InterPro" id="IPR050099">
    <property type="entry name" value="SIS_GmhA/DiaA_subfam"/>
</dbReference>
<dbReference type="NCBIfam" id="TIGR00441">
    <property type="entry name" value="gmhA"/>
    <property type="match status" value="1"/>
</dbReference>
<dbReference type="NCBIfam" id="NF001628">
    <property type="entry name" value="PRK00414.1"/>
    <property type="match status" value="1"/>
</dbReference>
<dbReference type="PANTHER" id="PTHR30390:SF7">
    <property type="entry name" value="PHOSPHOHEPTOSE ISOMERASE"/>
    <property type="match status" value="1"/>
</dbReference>
<dbReference type="PANTHER" id="PTHR30390">
    <property type="entry name" value="SEDOHEPTULOSE 7-PHOSPHATE ISOMERASE / DNAA INITIATOR-ASSOCIATING FACTOR FOR REPLICATION INITIATION"/>
    <property type="match status" value="1"/>
</dbReference>
<dbReference type="Pfam" id="PF13580">
    <property type="entry name" value="SIS_2"/>
    <property type="match status" value="1"/>
</dbReference>
<dbReference type="SUPFAM" id="SSF53697">
    <property type="entry name" value="SIS domain"/>
    <property type="match status" value="1"/>
</dbReference>
<dbReference type="PROSITE" id="PS51464">
    <property type="entry name" value="SIS"/>
    <property type="match status" value="1"/>
</dbReference>
<evidence type="ECO:0000255" key="1">
    <source>
        <dbReference type="HAMAP-Rule" id="MF_00067"/>
    </source>
</evidence>
<feature type="chain" id="PRO_1000009094" description="Phosphoheptose isomerase">
    <location>
        <begin position="1"/>
        <end position="192"/>
    </location>
</feature>
<feature type="domain" description="SIS" evidence="1">
    <location>
        <begin position="37"/>
        <end position="192"/>
    </location>
</feature>
<feature type="binding site" evidence="1">
    <location>
        <begin position="52"/>
        <end position="54"/>
    </location>
    <ligand>
        <name>substrate</name>
    </ligand>
</feature>
<feature type="binding site" evidence="1">
    <location>
        <position position="61"/>
    </location>
    <ligand>
        <name>Zn(2+)</name>
        <dbReference type="ChEBI" id="CHEBI:29105"/>
    </ligand>
</feature>
<feature type="binding site" evidence="1">
    <location>
        <position position="65"/>
    </location>
    <ligand>
        <name>substrate</name>
    </ligand>
</feature>
<feature type="binding site" evidence="1">
    <location>
        <position position="65"/>
    </location>
    <ligand>
        <name>Zn(2+)</name>
        <dbReference type="ChEBI" id="CHEBI:29105"/>
    </ligand>
</feature>
<feature type="binding site" evidence="1">
    <location>
        <begin position="93"/>
        <end position="94"/>
    </location>
    <ligand>
        <name>substrate</name>
    </ligand>
</feature>
<feature type="binding site" evidence="1">
    <location>
        <begin position="119"/>
        <end position="121"/>
    </location>
    <ligand>
        <name>substrate</name>
    </ligand>
</feature>
<feature type="binding site" evidence="1">
    <location>
        <position position="124"/>
    </location>
    <ligand>
        <name>substrate</name>
    </ligand>
</feature>
<feature type="binding site" evidence="1">
    <location>
        <position position="172"/>
    </location>
    <ligand>
        <name>substrate</name>
    </ligand>
</feature>
<feature type="binding site" evidence="1">
    <location>
        <position position="172"/>
    </location>
    <ligand>
        <name>Zn(2+)</name>
        <dbReference type="ChEBI" id="CHEBI:29105"/>
    </ligand>
</feature>
<feature type="binding site" evidence="1">
    <location>
        <position position="180"/>
    </location>
    <ligand>
        <name>Zn(2+)</name>
        <dbReference type="ChEBI" id="CHEBI:29105"/>
    </ligand>
</feature>
<proteinExistence type="inferred from homology"/>
<sequence>MYQDLIRNELNEAAETLANFLKDDANIHAIQRAAVLLADSFKAGGKVLSCGNGGSHCDAMHFAEELTGRYRENRPGYPAIAISDVSHISCVSNDFGYDYIFSRYVEAVGREGDVLLGISTSGNSGNVIKAIAAAREKGMKVITLTGKDGGKMAGTADIEIRVPHFGYADRIQEIHIKVIHILIQLIEKEMVK</sequence>
<gene>
    <name evidence="1" type="primary">gmhA</name>
    <name type="ordered locus">SCH_0311</name>
</gene>
<keyword id="KW-0119">Carbohydrate metabolism</keyword>
<keyword id="KW-0963">Cytoplasm</keyword>
<keyword id="KW-0413">Isomerase</keyword>
<keyword id="KW-0479">Metal-binding</keyword>
<keyword id="KW-0862">Zinc</keyword>
<comment type="function">
    <text evidence="1">Catalyzes the isomerization of sedoheptulose 7-phosphate in D-glycero-D-manno-heptose 7-phosphate.</text>
</comment>
<comment type="catalytic activity">
    <reaction evidence="1">
        <text>2 D-sedoheptulose 7-phosphate = D-glycero-alpha-D-manno-heptose 7-phosphate + D-glycero-beta-D-manno-heptose 7-phosphate</text>
        <dbReference type="Rhea" id="RHEA:27489"/>
        <dbReference type="ChEBI" id="CHEBI:57483"/>
        <dbReference type="ChEBI" id="CHEBI:60203"/>
        <dbReference type="ChEBI" id="CHEBI:60204"/>
        <dbReference type="EC" id="5.3.1.28"/>
    </reaction>
</comment>
<comment type="cofactor">
    <cofactor evidence="1">
        <name>Zn(2+)</name>
        <dbReference type="ChEBI" id="CHEBI:29105"/>
    </cofactor>
    <text evidence="1">Binds 1 zinc ion per subunit.</text>
</comment>
<comment type="pathway">
    <text evidence="1">Carbohydrate biosynthesis; D-glycero-D-manno-heptose 7-phosphate biosynthesis; D-glycero-alpha-D-manno-heptose 7-phosphate and D-glycero-beta-D-manno-heptose 7-phosphate from sedoheptulose 7-phosphate: step 1/1.</text>
</comment>
<comment type="subunit">
    <text evidence="1">Homotetramer.</text>
</comment>
<comment type="subcellular location">
    <subcellularLocation>
        <location evidence="1">Cytoplasm</location>
    </subcellularLocation>
</comment>
<comment type="miscellaneous">
    <text evidence="1">The reaction produces a racemic mixture of D-glycero-alpha-D-manno-heptose 7-phosphate and D-glycero-beta-D-manno-heptose 7-phosphate.</text>
</comment>
<comment type="similarity">
    <text evidence="1">Belongs to the SIS family. GmhA subfamily.</text>
</comment>